<sequence length="130" mass="14127">MSMQDPIADMLTRIRNGQAANKAAVTMPSSKLKVAIANVLKEEGFIEDFKVEGDTKPELELTLKYFQGKAVVESIQRVSRPGLRIYKRKDELPKVMAGLGIAVVSTSKGVMTDRAARQAGLGGEIICYVA</sequence>
<keyword id="KW-0687">Ribonucleoprotein</keyword>
<keyword id="KW-0689">Ribosomal protein</keyword>
<keyword id="KW-0694">RNA-binding</keyword>
<keyword id="KW-0699">rRNA-binding</keyword>
<protein>
    <recommendedName>
        <fullName evidence="1">Small ribosomal subunit protein uS8</fullName>
    </recommendedName>
    <alternativeName>
        <fullName evidence="2">30S ribosomal protein S8</fullName>
    </alternativeName>
</protein>
<comment type="function">
    <text evidence="1">One of the primary rRNA binding proteins, it binds directly to 16S rRNA central domain where it helps coordinate assembly of the platform of the 30S subunit.</text>
</comment>
<comment type="subunit">
    <text evidence="1">Part of the 30S ribosomal subunit. Contacts proteins S5 and S12.</text>
</comment>
<comment type="similarity">
    <text evidence="1">Belongs to the universal ribosomal protein uS8 family.</text>
</comment>
<dbReference type="EMBL" id="AP009240">
    <property type="protein sequence ID" value="BAG79105.1"/>
    <property type="molecule type" value="Genomic_DNA"/>
</dbReference>
<dbReference type="RefSeq" id="WP_000062611.1">
    <property type="nucleotide sequence ID" value="NC_011415.1"/>
</dbReference>
<dbReference type="SMR" id="B6I220"/>
<dbReference type="GeneID" id="93778681"/>
<dbReference type="KEGG" id="ecy:ECSE_3581"/>
<dbReference type="HOGENOM" id="CLU_098428_0_0_6"/>
<dbReference type="Proteomes" id="UP000008199">
    <property type="component" value="Chromosome"/>
</dbReference>
<dbReference type="GO" id="GO:1990904">
    <property type="term" value="C:ribonucleoprotein complex"/>
    <property type="evidence" value="ECO:0007669"/>
    <property type="project" value="UniProtKB-KW"/>
</dbReference>
<dbReference type="GO" id="GO:0005840">
    <property type="term" value="C:ribosome"/>
    <property type="evidence" value="ECO:0007669"/>
    <property type="project" value="UniProtKB-KW"/>
</dbReference>
<dbReference type="GO" id="GO:0019843">
    <property type="term" value="F:rRNA binding"/>
    <property type="evidence" value="ECO:0007669"/>
    <property type="project" value="UniProtKB-UniRule"/>
</dbReference>
<dbReference type="GO" id="GO:0003735">
    <property type="term" value="F:structural constituent of ribosome"/>
    <property type="evidence" value="ECO:0007669"/>
    <property type="project" value="InterPro"/>
</dbReference>
<dbReference type="GO" id="GO:0006412">
    <property type="term" value="P:translation"/>
    <property type="evidence" value="ECO:0007669"/>
    <property type="project" value="UniProtKB-UniRule"/>
</dbReference>
<dbReference type="FunFam" id="3.30.1370.30:FF:000003">
    <property type="entry name" value="30S ribosomal protein S8"/>
    <property type="match status" value="1"/>
</dbReference>
<dbReference type="FunFam" id="3.30.1490.10:FF:000001">
    <property type="entry name" value="30S ribosomal protein S8"/>
    <property type="match status" value="1"/>
</dbReference>
<dbReference type="Gene3D" id="3.30.1370.30">
    <property type="match status" value="1"/>
</dbReference>
<dbReference type="Gene3D" id="3.30.1490.10">
    <property type="match status" value="1"/>
</dbReference>
<dbReference type="HAMAP" id="MF_01302_B">
    <property type="entry name" value="Ribosomal_uS8_B"/>
    <property type="match status" value="1"/>
</dbReference>
<dbReference type="InterPro" id="IPR000630">
    <property type="entry name" value="Ribosomal_uS8"/>
</dbReference>
<dbReference type="InterPro" id="IPR047863">
    <property type="entry name" value="Ribosomal_uS8_CS"/>
</dbReference>
<dbReference type="InterPro" id="IPR035987">
    <property type="entry name" value="Ribosomal_uS8_sf"/>
</dbReference>
<dbReference type="NCBIfam" id="NF001109">
    <property type="entry name" value="PRK00136.1"/>
    <property type="match status" value="1"/>
</dbReference>
<dbReference type="PANTHER" id="PTHR11758">
    <property type="entry name" value="40S RIBOSOMAL PROTEIN S15A"/>
    <property type="match status" value="1"/>
</dbReference>
<dbReference type="Pfam" id="PF00410">
    <property type="entry name" value="Ribosomal_S8"/>
    <property type="match status" value="1"/>
</dbReference>
<dbReference type="SUPFAM" id="SSF56047">
    <property type="entry name" value="Ribosomal protein S8"/>
    <property type="match status" value="1"/>
</dbReference>
<dbReference type="PROSITE" id="PS00053">
    <property type="entry name" value="RIBOSOMAL_S8"/>
    <property type="match status" value="1"/>
</dbReference>
<gene>
    <name evidence="1" type="primary">rpsH</name>
    <name type="ordered locus">ECSE_3581</name>
</gene>
<name>RS8_ECOSE</name>
<evidence type="ECO:0000255" key="1">
    <source>
        <dbReference type="HAMAP-Rule" id="MF_01302"/>
    </source>
</evidence>
<evidence type="ECO:0000305" key="2"/>
<reference key="1">
    <citation type="journal article" date="2008" name="DNA Res.">
        <title>Complete genome sequence and comparative analysis of the wild-type commensal Escherichia coli strain SE11 isolated from a healthy adult.</title>
        <authorList>
            <person name="Oshima K."/>
            <person name="Toh H."/>
            <person name="Ogura Y."/>
            <person name="Sasamoto H."/>
            <person name="Morita H."/>
            <person name="Park S.-H."/>
            <person name="Ooka T."/>
            <person name="Iyoda S."/>
            <person name="Taylor T.D."/>
            <person name="Hayashi T."/>
            <person name="Itoh K."/>
            <person name="Hattori M."/>
        </authorList>
    </citation>
    <scope>NUCLEOTIDE SEQUENCE [LARGE SCALE GENOMIC DNA]</scope>
    <source>
        <strain>SE11</strain>
    </source>
</reference>
<proteinExistence type="inferred from homology"/>
<feature type="chain" id="PRO_1000140553" description="Small ribosomal subunit protein uS8">
    <location>
        <begin position="1"/>
        <end position="130"/>
    </location>
</feature>
<accession>B6I220</accession>
<organism>
    <name type="scientific">Escherichia coli (strain SE11)</name>
    <dbReference type="NCBI Taxonomy" id="409438"/>
    <lineage>
        <taxon>Bacteria</taxon>
        <taxon>Pseudomonadati</taxon>
        <taxon>Pseudomonadota</taxon>
        <taxon>Gammaproteobacteria</taxon>
        <taxon>Enterobacterales</taxon>
        <taxon>Enterobacteriaceae</taxon>
        <taxon>Escherichia</taxon>
    </lineage>
</organism>